<organism>
    <name type="scientific">Shewanella oneidensis (strain ATCC 700550 / JCM 31522 / CIP 106686 / LMG 19005 / NCIMB 14063 / MR-1)</name>
    <dbReference type="NCBI Taxonomy" id="211586"/>
    <lineage>
        <taxon>Bacteria</taxon>
        <taxon>Pseudomonadati</taxon>
        <taxon>Pseudomonadota</taxon>
        <taxon>Gammaproteobacteria</taxon>
        <taxon>Alteromonadales</taxon>
        <taxon>Shewanellaceae</taxon>
        <taxon>Shewanella</taxon>
    </lineage>
</organism>
<reference key="1">
    <citation type="journal article" date="2002" name="Nat. Biotechnol.">
        <title>Genome sequence of the dissimilatory metal ion-reducing bacterium Shewanella oneidensis.</title>
        <authorList>
            <person name="Heidelberg J.F."/>
            <person name="Paulsen I.T."/>
            <person name="Nelson K.E."/>
            <person name="Gaidos E.J."/>
            <person name="Nelson W.C."/>
            <person name="Read T.D."/>
            <person name="Eisen J.A."/>
            <person name="Seshadri R."/>
            <person name="Ward N.L."/>
            <person name="Methe B.A."/>
            <person name="Clayton R.A."/>
            <person name="Meyer T."/>
            <person name="Tsapin A."/>
            <person name="Scott J."/>
            <person name="Beanan M.J."/>
            <person name="Brinkac L.M."/>
            <person name="Daugherty S.C."/>
            <person name="DeBoy R.T."/>
            <person name="Dodson R.J."/>
            <person name="Durkin A.S."/>
            <person name="Haft D.H."/>
            <person name="Kolonay J.F."/>
            <person name="Madupu R."/>
            <person name="Peterson J.D."/>
            <person name="Umayam L.A."/>
            <person name="White O."/>
            <person name="Wolf A.M."/>
            <person name="Vamathevan J.J."/>
            <person name="Weidman J.F."/>
            <person name="Impraim M."/>
            <person name="Lee K."/>
            <person name="Berry K.J."/>
            <person name="Lee C."/>
            <person name="Mueller J."/>
            <person name="Khouri H.M."/>
            <person name="Gill J."/>
            <person name="Utterback T.R."/>
            <person name="McDonald L.A."/>
            <person name="Feldblyum T.V."/>
            <person name="Smith H.O."/>
            <person name="Venter J.C."/>
            <person name="Nealson K.H."/>
            <person name="Fraser C.M."/>
        </authorList>
    </citation>
    <scope>NUCLEOTIDE SEQUENCE [LARGE SCALE GENOMIC DNA]</scope>
    <source>
        <strain>ATCC 700550 / JCM 31522 / CIP 106686 / LMG 19005 / NCIMB 14063 / MR-1</strain>
    </source>
</reference>
<dbReference type="EMBL" id="AE014299">
    <property type="protein sequence ID" value="AAN57275.2"/>
    <property type="molecule type" value="Genomic_DNA"/>
</dbReference>
<dbReference type="RefSeq" id="NP_719831.2">
    <property type="nucleotide sequence ID" value="NC_004347.2"/>
</dbReference>
<dbReference type="SMR" id="Q7ZAJ5"/>
<dbReference type="STRING" id="211586.SO_4306"/>
<dbReference type="PaxDb" id="211586-SO_4306"/>
<dbReference type="KEGG" id="son:SO_4306"/>
<dbReference type="PATRIC" id="fig|211586.12.peg.4169"/>
<dbReference type="eggNOG" id="COG4973">
    <property type="taxonomic scope" value="Bacteria"/>
</dbReference>
<dbReference type="HOGENOM" id="CLU_027562_9_0_6"/>
<dbReference type="OrthoDB" id="9801717at2"/>
<dbReference type="PhylomeDB" id="Q7ZAJ5"/>
<dbReference type="BioCyc" id="SONE211586:G1GMP-3977-MONOMER"/>
<dbReference type="Proteomes" id="UP000008186">
    <property type="component" value="Chromosome"/>
</dbReference>
<dbReference type="GO" id="GO:0005737">
    <property type="term" value="C:cytoplasm"/>
    <property type="evidence" value="ECO:0007669"/>
    <property type="project" value="UniProtKB-SubCell"/>
</dbReference>
<dbReference type="GO" id="GO:0048476">
    <property type="term" value="C:Holliday junction resolvase complex"/>
    <property type="evidence" value="ECO:0000318"/>
    <property type="project" value="GO_Central"/>
</dbReference>
<dbReference type="GO" id="GO:0003677">
    <property type="term" value="F:DNA binding"/>
    <property type="evidence" value="ECO:0000318"/>
    <property type="project" value="GO_Central"/>
</dbReference>
<dbReference type="GO" id="GO:0009037">
    <property type="term" value="F:tyrosine-based site-specific recombinase activity"/>
    <property type="evidence" value="ECO:0000318"/>
    <property type="project" value="GO_Central"/>
</dbReference>
<dbReference type="GO" id="GO:0051301">
    <property type="term" value="P:cell division"/>
    <property type="evidence" value="ECO:0007669"/>
    <property type="project" value="UniProtKB-KW"/>
</dbReference>
<dbReference type="GO" id="GO:0007059">
    <property type="term" value="P:chromosome segregation"/>
    <property type="evidence" value="ECO:0000318"/>
    <property type="project" value="GO_Central"/>
</dbReference>
<dbReference type="GO" id="GO:0006310">
    <property type="term" value="P:DNA recombination"/>
    <property type="evidence" value="ECO:0000318"/>
    <property type="project" value="GO_Central"/>
</dbReference>
<dbReference type="GO" id="GO:0006313">
    <property type="term" value="P:DNA transposition"/>
    <property type="evidence" value="ECO:0007669"/>
    <property type="project" value="UniProtKB-UniRule"/>
</dbReference>
<dbReference type="GO" id="GO:0071139">
    <property type="term" value="P:resolution of DNA recombination intermediates"/>
    <property type="evidence" value="ECO:0000318"/>
    <property type="project" value="GO_Central"/>
</dbReference>
<dbReference type="CDD" id="cd00798">
    <property type="entry name" value="INT_XerDC_C"/>
    <property type="match status" value="1"/>
</dbReference>
<dbReference type="Gene3D" id="1.10.150.130">
    <property type="match status" value="1"/>
</dbReference>
<dbReference type="Gene3D" id="1.10.443.10">
    <property type="entry name" value="Intergrase catalytic core"/>
    <property type="match status" value="1"/>
</dbReference>
<dbReference type="HAMAP" id="MF_01808">
    <property type="entry name" value="Recomb_XerC_XerD"/>
    <property type="match status" value="1"/>
</dbReference>
<dbReference type="InterPro" id="IPR044068">
    <property type="entry name" value="CB"/>
</dbReference>
<dbReference type="InterPro" id="IPR011010">
    <property type="entry name" value="DNA_brk_join_enz"/>
</dbReference>
<dbReference type="InterPro" id="IPR013762">
    <property type="entry name" value="Integrase-like_cat_sf"/>
</dbReference>
<dbReference type="InterPro" id="IPR002104">
    <property type="entry name" value="Integrase_catalytic"/>
</dbReference>
<dbReference type="InterPro" id="IPR010998">
    <property type="entry name" value="Integrase_recombinase_N"/>
</dbReference>
<dbReference type="InterPro" id="IPR004107">
    <property type="entry name" value="Integrase_SAM-like_N"/>
</dbReference>
<dbReference type="InterPro" id="IPR011931">
    <property type="entry name" value="Recomb_XerC"/>
</dbReference>
<dbReference type="InterPro" id="IPR023009">
    <property type="entry name" value="Tyrosine_recombinase_XerC/XerD"/>
</dbReference>
<dbReference type="InterPro" id="IPR050090">
    <property type="entry name" value="Tyrosine_recombinase_XerCD"/>
</dbReference>
<dbReference type="NCBIfam" id="TIGR02224">
    <property type="entry name" value="recomb_XerC"/>
    <property type="match status" value="1"/>
</dbReference>
<dbReference type="PANTHER" id="PTHR30349">
    <property type="entry name" value="PHAGE INTEGRASE-RELATED"/>
    <property type="match status" value="1"/>
</dbReference>
<dbReference type="PANTHER" id="PTHR30349:SF81">
    <property type="entry name" value="TYROSINE RECOMBINASE XERC"/>
    <property type="match status" value="1"/>
</dbReference>
<dbReference type="Pfam" id="PF02899">
    <property type="entry name" value="Phage_int_SAM_1"/>
    <property type="match status" value="1"/>
</dbReference>
<dbReference type="Pfam" id="PF00589">
    <property type="entry name" value="Phage_integrase"/>
    <property type="match status" value="1"/>
</dbReference>
<dbReference type="SUPFAM" id="SSF56349">
    <property type="entry name" value="DNA breaking-rejoining enzymes"/>
    <property type="match status" value="1"/>
</dbReference>
<dbReference type="SUPFAM" id="SSF47823">
    <property type="entry name" value="lambda integrase-like, N-terminal domain"/>
    <property type="match status" value="1"/>
</dbReference>
<dbReference type="PROSITE" id="PS51900">
    <property type="entry name" value="CB"/>
    <property type="match status" value="1"/>
</dbReference>
<dbReference type="PROSITE" id="PS51898">
    <property type="entry name" value="TYR_RECOMBINASE"/>
    <property type="match status" value="1"/>
</dbReference>
<protein>
    <recommendedName>
        <fullName evidence="1">Tyrosine recombinase XerC</fullName>
    </recommendedName>
</protein>
<keyword id="KW-0131">Cell cycle</keyword>
<keyword id="KW-0132">Cell division</keyword>
<keyword id="KW-0159">Chromosome partition</keyword>
<keyword id="KW-0963">Cytoplasm</keyword>
<keyword id="KW-0229">DNA integration</keyword>
<keyword id="KW-0233">DNA recombination</keyword>
<keyword id="KW-0238">DNA-binding</keyword>
<keyword id="KW-1185">Reference proteome</keyword>
<accession>Q7ZAJ5</accession>
<evidence type="ECO:0000255" key="1">
    <source>
        <dbReference type="HAMAP-Rule" id="MF_01808"/>
    </source>
</evidence>
<evidence type="ECO:0000255" key="2">
    <source>
        <dbReference type="PROSITE-ProRule" id="PRU01246"/>
    </source>
</evidence>
<evidence type="ECO:0000255" key="3">
    <source>
        <dbReference type="PROSITE-ProRule" id="PRU01248"/>
    </source>
</evidence>
<name>XERC_SHEON</name>
<gene>
    <name evidence="1" type="primary">xerC</name>
    <name type="ordered locus">SO_4306</name>
</gene>
<feature type="chain" id="PRO_0000095327" description="Tyrosine recombinase XerC">
    <location>
        <begin position="1"/>
        <end position="306"/>
    </location>
</feature>
<feature type="domain" description="Core-binding (CB)" evidence="3">
    <location>
        <begin position="10"/>
        <end position="94"/>
    </location>
</feature>
<feature type="domain" description="Tyr recombinase" evidence="2">
    <location>
        <begin position="115"/>
        <end position="294"/>
    </location>
</feature>
<feature type="active site" evidence="1">
    <location>
        <position position="154"/>
    </location>
</feature>
<feature type="active site" evidence="1">
    <location>
        <position position="178"/>
    </location>
</feature>
<feature type="active site" evidence="1">
    <location>
        <position position="246"/>
    </location>
</feature>
<feature type="active site" evidence="1">
    <location>
        <position position="249"/>
    </location>
</feature>
<feature type="active site" evidence="1">
    <location>
        <position position="272"/>
    </location>
</feature>
<feature type="active site" description="O-(3'-phospho-DNA)-tyrosine intermediate" evidence="1">
    <location>
        <position position="281"/>
    </location>
</feature>
<sequence length="306" mass="34939">MNPPADDMPARCHSYLQQFEAYMQSERQLSAHTVRNYLYELQRGRELLPEGIDLLNVGREHWQQVLAKLHRKGLSPRSLSLWLSAVKQWGEFLLRAGAIELNPAKGLSAPKQAKPLPKNIDVDSLTHLLEIDGNDPLTLRDKAIMELFYSSGLRLAELAALDLSSVQYDQREVRVLGKGNKERIVPVGRYAIDAISAWLECRRQIPCEDNALFVTEKGKRLSHRSIQARMSKWGQEQALSMRVHPHKLRHSFATHMLESSADLRAVQELLGHENLSTTQIYTSLDFQHLAKVYDNAHPRAKKQQDK</sequence>
<comment type="function">
    <text evidence="1">Site-specific tyrosine recombinase, which acts by catalyzing the cutting and rejoining of the recombining DNA molecules. The XerC-XerD complex is essential to convert dimers of the bacterial chromosome into monomers to permit their segregation at cell division. It also contributes to the segregational stability of plasmids.</text>
</comment>
<comment type="subunit">
    <text evidence="1">Forms a cyclic heterotetrameric complex composed of two molecules of XerC and two molecules of XerD.</text>
</comment>
<comment type="subcellular location">
    <subcellularLocation>
        <location evidence="1">Cytoplasm</location>
    </subcellularLocation>
</comment>
<comment type="similarity">
    <text evidence="1">Belongs to the 'phage' integrase family. XerC subfamily.</text>
</comment>
<proteinExistence type="inferred from homology"/>